<evidence type="ECO:0000250" key="1"/>
<evidence type="ECO:0000255" key="2">
    <source>
        <dbReference type="PROSITE-ProRule" id="PRU10095"/>
    </source>
</evidence>
<evidence type="ECO:0000305" key="3"/>
<dbReference type="EC" id="3.4.24.-"/>
<dbReference type="EMBL" id="CH408155">
    <property type="protein sequence ID" value="EDK36365.2"/>
    <property type="molecule type" value="Genomic_DNA"/>
</dbReference>
<dbReference type="RefSeq" id="XP_001487086.1">
    <property type="nucleotide sequence ID" value="XM_001487036.1"/>
</dbReference>
<dbReference type="FunCoup" id="A5DB08">
    <property type="interactions" value="489"/>
</dbReference>
<dbReference type="STRING" id="294746.A5DB08"/>
<dbReference type="MEROPS" id="M76.002"/>
<dbReference type="GeneID" id="5129398"/>
<dbReference type="KEGG" id="pgu:PGUG_00463"/>
<dbReference type="VEuPathDB" id="FungiDB:PGUG_00463"/>
<dbReference type="eggNOG" id="KOG3314">
    <property type="taxonomic scope" value="Eukaryota"/>
</dbReference>
<dbReference type="HOGENOM" id="CLU_079125_0_0_1"/>
<dbReference type="InParanoid" id="A5DB08"/>
<dbReference type="OMA" id="KRHHQTC"/>
<dbReference type="OrthoDB" id="285308at2759"/>
<dbReference type="Proteomes" id="UP000001997">
    <property type="component" value="Unassembled WGS sequence"/>
</dbReference>
<dbReference type="GO" id="GO:0005743">
    <property type="term" value="C:mitochondrial inner membrane"/>
    <property type="evidence" value="ECO:0007669"/>
    <property type="project" value="UniProtKB-SubCell"/>
</dbReference>
<dbReference type="GO" id="GO:0046872">
    <property type="term" value="F:metal ion binding"/>
    <property type="evidence" value="ECO:0007669"/>
    <property type="project" value="UniProtKB-KW"/>
</dbReference>
<dbReference type="GO" id="GO:0004222">
    <property type="term" value="F:metalloendopeptidase activity"/>
    <property type="evidence" value="ECO:0007669"/>
    <property type="project" value="InterPro"/>
</dbReference>
<dbReference type="GO" id="GO:0034982">
    <property type="term" value="P:mitochondrial protein processing"/>
    <property type="evidence" value="ECO:0007669"/>
    <property type="project" value="TreeGrafter"/>
</dbReference>
<dbReference type="GO" id="GO:0033615">
    <property type="term" value="P:mitochondrial proton-transporting ATP synthase complex assembly"/>
    <property type="evidence" value="ECO:0007669"/>
    <property type="project" value="TreeGrafter"/>
</dbReference>
<dbReference type="InterPro" id="IPR019165">
    <property type="entry name" value="Peptidase_M76_ATP23"/>
</dbReference>
<dbReference type="PANTHER" id="PTHR21711">
    <property type="entry name" value="MITOCHONDRIAL INNER MEMBRANE PROTEASE"/>
    <property type="match status" value="1"/>
</dbReference>
<dbReference type="PANTHER" id="PTHR21711:SF0">
    <property type="entry name" value="MITOCHONDRIAL INNER MEMBRANE PROTEASE ATP23 HOMOLOG"/>
    <property type="match status" value="1"/>
</dbReference>
<dbReference type="Pfam" id="PF09768">
    <property type="entry name" value="Peptidase_M76"/>
    <property type="match status" value="1"/>
</dbReference>
<dbReference type="PROSITE" id="PS00142">
    <property type="entry name" value="ZINC_PROTEASE"/>
    <property type="match status" value="1"/>
</dbReference>
<accession>A5DB08</accession>
<gene>
    <name type="primary">ATP23</name>
    <name type="ORF">PGUG_00463</name>
</gene>
<name>ATP23_PICGU</name>
<comment type="function">
    <text evidence="1">Has a dual role in the assembly of mitochondrial ATPase. Acts as a protease that removes N-terminal residues of mitochondrial ATPase CF(0) subunit 6 at the intermembrane space side. Also involved in the correct assembly of the membrane-embedded ATPase CF(0) particle, probably mediating association of subunit 6 with the subunit 9 ring (By similarity).</text>
</comment>
<comment type="subcellular location">
    <subcellularLocation>
        <location>Mitochondrion inner membrane</location>
        <topology>Peripheral membrane protein</topology>
        <orientation>Intermembrane side</orientation>
    </subcellularLocation>
    <text evidence="1">Associates loosely with the inner membrane.</text>
</comment>
<comment type="similarity">
    <text evidence="3">Belongs to the peptidase M76 family.</text>
</comment>
<reference key="1">
    <citation type="journal article" date="2009" name="Nature">
        <title>Evolution of pathogenicity and sexual reproduction in eight Candida genomes.</title>
        <authorList>
            <person name="Butler G."/>
            <person name="Rasmussen M.D."/>
            <person name="Lin M.F."/>
            <person name="Santos M.A.S."/>
            <person name="Sakthikumar S."/>
            <person name="Munro C.A."/>
            <person name="Rheinbay E."/>
            <person name="Grabherr M."/>
            <person name="Forche A."/>
            <person name="Reedy J.L."/>
            <person name="Agrafioti I."/>
            <person name="Arnaud M.B."/>
            <person name="Bates S."/>
            <person name="Brown A.J.P."/>
            <person name="Brunke S."/>
            <person name="Costanzo M.C."/>
            <person name="Fitzpatrick D.A."/>
            <person name="de Groot P.W.J."/>
            <person name="Harris D."/>
            <person name="Hoyer L.L."/>
            <person name="Hube B."/>
            <person name="Klis F.M."/>
            <person name="Kodira C."/>
            <person name="Lennard N."/>
            <person name="Logue M.E."/>
            <person name="Martin R."/>
            <person name="Neiman A.M."/>
            <person name="Nikolaou E."/>
            <person name="Quail M.A."/>
            <person name="Quinn J."/>
            <person name="Santos M.C."/>
            <person name="Schmitzberger F.F."/>
            <person name="Sherlock G."/>
            <person name="Shah P."/>
            <person name="Silverstein K.A.T."/>
            <person name="Skrzypek M.S."/>
            <person name="Soll D."/>
            <person name="Staggs R."/>
            <person name="Stansfield I."/>
            <person name="Stumpf M.P.H."/>
            <person name="Sudbery P.E."/>
            <person name="Srikantha T."/>
            <person name="Zeng Q."/>
            <person name="Berman J."/>
            <person name="Berriman M."/>
            <person name="Heitman J."/>
            <person name="Gow N.A.R."/>
            <person name="Lorenz M.C."/>
            <person name="Birren B.W."/>
            <person name="Kellis M."/>
            <person name="Cuomo C.A."/>
        </authorList>
    </citation>
    <scope>NUCLEOTIDE SEQUENCE [LARGE SCALE GENOMIC DNA]</scope>
    <source>
        <strain>ATCC 6260 / CBS 566 / DSM 6381 / JCM 1539 / NBRC 10279 / NRRL Y-324</strain>
    </source>
</reference>
<proteinExistence type="inferred from homology"/>
<feature type="chain" id="PRO_0000330070" description="Mitochondrial inner membrane protease ATP23">
    <location>
        <begin position="1"/>
        <end position="242"/>
    </location>
</feature>
<feature type="active site" evidence="2">
    <location>
        <position position="143"/>
    </location>
</feature>
<feature type="binding site" evidence="1">
    <location>
        <position position="142"/>
    </location>
    <ligand>
        <name>a divalent metal cation</name>
        <dbReference type="ChEBI" id="CHEBI:60240"/>
        <note>catalytic</note>
    </ligand>
</feature>
<feature type="binding site" evidence="1">
    <location>
        <position position="146"/>
    </location>
    <ligand>
        <name>a divalent metal cation</name>
        <dbReference type="ChEBI" id="CHEBI:60240"/>
        <note>catalytic</note>
    </ligand>
</feature>
<keyword id="KW-0378">Hydrolase</keyword>
<keyword id="KW-0472">Membrane</keyword>
<keyword id="KW-0479">Metal-binding</keyword>
<keyword id="KW-0482">Metalloprotease</keyword>
<keyword id="KW-0496">Mitochondrion</keyword>
<keyword id="KW-0999">Mitochondrion inner membrane</keyword>
<keyword id="KW-0645">Protease</keyword>
<keyword id="KW-1185">Reference proteome</keyword>
<organism>
    <name type="scientific">Meyerozyma guilliermondii (strain ATCC 6260 / CBS 566 / DSM 6381 / JCM 1539 / NBRC 10279 / NRRL Y-324)</name>
    <name type="common">Yeast</name>
    <name type="synonym">Candida guilliermondii</name>
    <dbReference type="NCBI Taxonomy" id="294746"/>
    <lineage>
        <taxon>Eukaryota</taxon>
        <taxon>Fungi</taxon>
        <taxon>Dikarya</taxon>
        <taxon>Ascomycota</taxon>
        <taxon>Saccharomycotina</taxon>
        <taxon>Pichiomycetes</taxon>
        <taxon>Debaryomycetaceae</taxon>
        <taxon>Meyerozyma</taxon>
    </lineage>
</organism>
<protein>
    <recommendedName>
        <fullName>Mitochondrial inner membrane protease ATP23</fullName>
        <ecNumber>3.4.24.-</ecNumber>
    </recommendedName>
</protein>
<sequence length="242" mass="28042">MDVIYRSGTKLIWSSSMNDDRQTSSEDKLKGFEWWRRSLQYRTGLGLDEEEKLQFEHDYRVKNLPQKCDSCIEYRDWMFKYSPSVKFMMEHVQKLGGNLSSKNITCDMCDGMKGGGFHPEMGILLCSNWIKDKWQLEDILTHELVHAYDHLKFKVDLTNLKHHACTEIRASALSGECRILNEIKKTGLGDFGSKFQACVRRRAAISVSANPNCSSKEEAESVVNAVWESCFNDTRPFERVYR</sequence>